<comment type="function">
    <text evidence="2">Phosphatidylinositol 5-phosphate 4-kinase with low enzymatic activity. May be a GTP sensor, has higher GTP-dependent kinase activity than ATP-dependent kinase activity.</text>
</comment>
<comment type="catalytic activity">
    <reaction evidence="2">
        <text>a 1,2-diacyl-sn-glycero-3-phospho-(1D-myo-inositol-5-phosphate) + ATP = a 1,2-diacyl-sn-glycero-3-phospho-(1D-myo-inositol-4,5-bisphosphate) + ADP + H(+)</text>
        <dbReference type="Rhea" id="RHEA:12280"/>
        <dbReference type="ChEBI" id="CHEBI:15378"/>
        <dbReference type="ChEBI" id="CHEBI:30616"/>
        <dbReference type="ChEBI" id="CHEBI:57795"/>
        <dbReference type="ChEBI" id="CHEBI:58456"/>
        <dbReference type="ChEBI" id="CHEBI:456216"/>
        <dbReference type="EC" id="2.7.1.149"/>
    </reaction>
    <physiologicalReaction direction="left-to-right" evidence="2">
        <dbReference type="Rhea" id="RHEA:12281"/>
    </physiologicalReaction>
</comment>
<comment type="catalytic activity">
    <reaction evidence="2">
        <text>1,2-dihexadecanoyl-sn-glycero-3-phospho-(1D-myo-inositol-5-phosphate) + ATP = 1,2-dihexadecanoyl-sn-glycero-3-phospho-(1D-myo-inositol-4,5-bisphosphate) + ADP + H(+)</text>
        <dbReference type="Rhea" id="RHEA:55992"/>
        <dbReference type="ChEBI" id="CHEBI:15378"/>
        <dbReference type="ChEBI" id="CHEBI:30616"/>
        <dbReference type="ChEBI" id="CHEBI:83423"/>
        <dbReference type="ChEBI" id="CHEBI:84968"/>
        <dbReference type="ChEBI" id="CHEBI:456216"/>
    </reaction>
    <physiologicalReaction direction="left-to-right" evidence="2">
        <dbReference type="Rhea" id="RHEA:55993"/>
    </physiologicalReaction>
</comment>
<comment type="catalytic activity">
    <reaction evidence="2">
        <text>1,2-dihexadecanoyl-sn-glycero-3-phospho-(1D-myo-inositol-5-phosphate) + GTP = 1,2-dihexadecanoyl-sn-glycero-3-phospho-(1D-myo-inositol-4,5-bisphosphate) + GDP + H(+)</text>
        <dbReference type="Rhea" id="RHEA:55964"/>
        <dbReference type="ChEBI" id="CHEBI:15378"/>
        <dbReference type="ChEBI" id="CHEBI:37565"/>
        <dbReference type="ChEBI" id="CHEBI:58189"/>
        <dbReference type="ChEBI" id="CHEBI:83423"/>
        <dbReference type="ChEBI" id="CHEBI:84968"/>
    </reaction>
    <physiologicalReaction direction="left-to-right" evidence="2">
        <dbReference type="Rhea" id="RHEA:55965"/>
    </physiologicalReaction>
</comment>
<comment type="subcellular location">
    <subcellularLocation>
        <location evidence="1">Endoplasmic reticulum</location>
    </subcellularLocation>
    <subcellularLocation>
        <location evidence="1">Cytoplasm</location>
    </subcellularLocation>
</comment>
<comment type="PTM">
    <text evidence="1">Phosphorylated, phosphorylation is induced by EGF.</text>
</comment>
<dbReference type="EC" id="2.7.1.149" evidence="2"/>
<dbReference type="EMBL" id="BC045883">
    <property type="protein sequence ID" value="AAH45883.1"/>
    <property type="molecule type" value="mRNA"/>
</dbReference>
<dbReference type="EMBL" id="BC071466">
    <property type="protein sequence ID" value="AAH71466.1"/>
    <property type="molecule type" value="mRNA"/>
</dbReference>
<dbReference type="RefSeq" id="NP_956395.2">
    <property type="nucleotide sequence ID" value="NM_200101.2"/>
</dbReference>
<dbReference type="SMR" id="Q6IQE1"/>
<dbReference type="FunCoup" id="Q6IQE1">
    <property type="interactions" value="583"/>
</dbReference>
<dbReference type="STRING" id="7955.ENSDARP00000042700"/>
<dbReference type="PaxDb" id="7955-ENSDARP00000042700"/>
<dbReference type="GeneID" id="373124"/>
<dbReference type="KEGG" id="dre:373124"/>
<dbReference type="AGR" id="ZFIN:ZDB-GENE-030828-9"/>
<dbReference type="CTD" id="373124"/>
<dbReference type="ZFIN" id="ZDB-GENE-030828-9">
    <property type="gene designation" value="pip4k2ca"/>
</dbReference>
<dbReference type="eggNOG" id="KOG0229">
    <property type="taxonomic scope" value="Eukaryota"/>
</dbReference>
<dbReference type="InParanoid" id="Q6IQE1"/>
<dbReference type="OrthoDB" id="20783at2759"/>
<dbReference type="PhylomeDB" id="Q6IQE1"/>
<dbReference type="Reactome" id="R-DRE-1660499">
    <property type="pathway name" value="Synthesis of PIPs at the plasma membrane"/>
</dbReference>
<dbReference type="Reactome" id="R-DRE-6811555">
    <property type="pathway name" value="PI5P Regulates TP53 Acetylation"/>
</dbReference>
<dbReference type="Reactome" id="R-DRE-6811558">
    <property type="pathway name" value="PI5P, PP2A and IER3 Regulate PI3K/AKT Signaling"/>
</dbReference>
<dbReference type="Reactome" id="R-DRE-8847453">
    <property type="pathway name" value="Synthesis of PIPs in the nucleus"/>
</dbReference>
<dbReference type="PRO" id="PR:Q6IQE1"/>
<dbReference type="Proteomes" id="UP000000437">
    <property type="component" value="Chromosome 23"/>
</dbReference>
<dbReference type="GO" id="GO:0005783">
    <property type="term" value="C:endoplasmic reticulum"/>
    <property type="evidence" value="ECO:0007669"/>
    <property type="project" value="UniProtKB-SubCell"/>
</dbReference>
<dbReference type="GO" id="GO:0005886">
    <property type="term" value="C:plasma membrane"/>
    <property type="evidence" value="ECO:0000318"/>
    <property type="project" value="GO_Central"/>
</dbReference>
<dbReference type="GO" id="GO:0016308">
    <property type="term" value="F:1-phosphatidylinositol-4-phosphate 5-kinase activity"/>
    <property type="evidence" value="ECO:0000250"/>
    <property type="project" value="UniProtKB"/>
</dbReference>
<dbReference type="GO" id="GO:0016309">
    <property type="term" value="F:1-phosphatidylinositol-5-phosphate 4-kinase activity"/>
    <property type="evidence" value="ECO:0000318"/>
    <property type="project" value="GO_Central"/>
</dbReference>
<dbReference type="GO" id="GO:0005524">
    <property type="term" value="F:ATP binding"/>
    <property type="evidence" value="ECO:0007669"/>
    <property type="project" value="UniProtKB-KW"/>
</dbReference>
<dbReference type="GO" id="GO:1902635">
    <property type="term" value="P:1-phosphatidyl-1D-myo-inositol 4,5-bisphosphate biosynthetic process"/>
    <property type="evidence" value="ECO:0000250"/>
    <property type="project" value="UniProtKB"/>
</dbReference>
<dbReference type="GO" id="GO:0046854">
    <property type="term" value="P:phosphatidylinositol phosphate biosynthetic process"/>
    <property type="evidence" value="ECO:0000318"/>
    <property type="project" value="GO_Central"/>
</dbReference>
<dbReference type="CDD" id="cd17311">
    <property type="entry name" value="PIPKc_PIP5K2C"/>
    <property type="match status" value="1"/>
</dbReference>
<dbReference type="FunFam" id="3.30.800.10:FF:000002">
    <property type="entry name" value="Phosphatidylinositol 5-phosphate 4-kinase type-2 beta"/>
    <property type="match status" value="1"/>
</dbReference>
<dbReference type="FunFam" id="3.30.810.10:FF:000003">
    <property type="entry name" value="Phosphatidylinositol 5-phosphate 4-kinase type-2 beta"/>
    <property type="match status" value="1"/>
</dbReference>
<dbReference type="Gene3D" id="3.30.810.10">
    <property type="entry name" value="2-Layer Sandwich"/>
    <property type="match status" value="2"/>
</dbReference>
<dbReference type="Gene3D" id="3.30.800.10">
    <property type="entry name" value="Phosphatidylinositol Phosphate Kinase II Beta"/>
    <property type="match status" value="1"/>
</dbReference>
<dbReference type="InterPro" id="IPR027483">
    <property type="entry name" value="PInositol-4-P-4/5-kinase_C_sf"/>
</dbReference>
<dbReference type="InterPro" id="IPR002498">
    <property type="entry name" value="PInositol-4-P-4/5-kinase_core"/>
</dbReference>
<dbReference type="InterPro" id="IPR027484">
    <property type="entry name" value="PInositol-4-P-5-kinase_N"/>
</dbReference>
<dbReference type="InterPro" id="IPR023610">
    <property type="entry name" value="PInositol-4/5-P-5/4-kinase"/>
</dbReference>
<dbReference type="PANTHER" id="PTHR23086:SF35">
    <property type="entry name" value="PHOSPHATIDYLINOSITOL 5-PHOSPHATE 4-KINASE TYPE-2 GAMMA"/>
    <property type="match status" value="1"/>
</dbReference>
<dbReference type="PANTHER" id="PTHR23086">
    <property type="entry name" value="PHOSPHATIDYLINOSITOL-4-PHOSPHATE 5-KINASE"/>
    <property type="match status" value="1"/>
</dbReference>
<dbReference type="Pfam" id="PF01504">
    <property type="entry name" value="PIP5K"/>
    <property type="match status" value="1"/>
</dbReference>
<dbReference type="SMART" id="SM00330">
    <property type="entry name" value="PIPKc"/>
    <property type="match status" value="1"/>
</dbReference>
<dbReference type="SUPFAM" id="SSF56104">
    <property type="entry name" value="SAICAR synthase-like"/>
    <property type="match status" value="1"/>
</dbReference>
<dbReference type="PROSITE" id="PS51455">
    <property type="entry name" value="PIPK"/>
    <property type="match status" value="1"/>
</dbReference>
<gene>
    <name type="primary">pip4k2c</name>
    <name type="synonym">pip5k2</name>
    <name type="synonym">pip5k2c</name>
</gene>
<feature type="chain" id="PRO_0000285754" description="Phosphatidylinositol 5-phosphate 4-kinase type-2 gamma">
    <location>
        <begin position="1"/>
        <end position="416"/>
    </location>
</feature>
<feature type="domain" description="PIPK" evidence="3">
    <location>
        <begin position="38"/>
        <end position="415"/>
    </location>
</feature>
<feature type="sequence conflict" description="In Ref. 1; AAH45883." evidence="4" ref="1">
    <original>E</original>
    <variation>K</variation>
    <location>
        <position position="94"/>
    </location>
</feature>
<feature type="sequence conflict" description="In Ref. 1; AAH45883." evidence="4" ref="1">
    <original>V</original>
    <variation>I</variation>
    <location>
        <position position="248"/>
    </location>
</feature>
<protein>
    <recommendedName>
        <fullName evidence="4">Phosphatidylinositol 5-phosphate 4-kinase type-2 gamma</fullName>
        <ecNumber evidence="2">2.7.1.149</ecNumber>
    </recommendedName>
    <alternativeName>
        <fullName>Phosphatidylinositol 5-phosphate 4-kinase type II gamma</fullName>
        <shortName>PI(5)P 4-kinase type II gamma</shortName>
        <shortName>PIP4KII-gamma</shortName>
    </alternativeName>
</protein>
<proteinExistence type="evidence at transcript level"/>
<accession>Q6IQE1</accession>
<accession>Q7ZVF5</accession>
<name>PI42C_DANRE</name>
<organism>
    <name type="scientific">Danio rerio</name>
    <name type="common">Zebrafish</name>
    <name type="synonym">Brachydanio rerio</name>
    <dbReference type="NCBI Taxonomy" id="7955"/>
    <lineage>
        <taxon>Eukaryota</taxon>
        <taxon>Metazoa</taxon>
        <taxon>Chordata</taxon>
        <taxon>Craniata</taxon>
        <taxon>Vertebrata</taxon>
        <taxon>Euteleostomi</taxon>
        <taxon>Actinopterygii</taxon>
        <taxon>Neopterygii</taxon>
        <taxon>Teleostei</taxon>
        <taxon>Ostariophysi</taxon>
        <taxon>Cypriniformes</taxon>
        <taxon>Danionidae</taxon>
        <taxon>Danioninae</taxon>
        <taxon>Danio</taxon>
    </lineage>
</organism>
<evidence type="ECO:0000250" key="1">
    <source>
        <dbReference type="UniProtKB" id="O88370"/>
    </source>
</evidence>
<evidence type="ECO:0000250" key="2">
    <source>
        <dbReference type="UniProtKB" id="Q8TBX8"/>
    </source>
</evidence>
<evidence type="ECO:0000255" key="3">
    <source>
        <dbReference type="PROSITE-ProRule" id="PRU00781"/>
    </source>
</evidence>
<evidence type="ECO:0000305" key="4"/>
<sequence length="416" mass="47379">MASLGNSGSASSPMVMLAPKTKTKKRHFMQQKVKVFRASDPMLSVFMWGVNHSINDLNQVPVPVMLLPDDFKANTKIKVNNHLFNKENLPSHFEFKEYCPQVFRNLRERFGIEDLDYQASLARSAPMKGDGQGEGLLFTSYDRTLIVKQISSEEVADMHNILSEYHQHIVKCHGSTLLPQFLGMYRITVESEDTYLIVMRNMFSHRLLVHRKYDLKGSLVDREASDKEKVKELPTFKDMDFRNNMQKVYVTEEQKEKMMEKLNRDVEFLVKLKIMDYSLLLGIHDVARGEREEEEAEEPCYEDDADPENGLAPALQVGSYGTSPEGIAGYMNSIKPLGPGEFDPYIDVYAVKSAPGAPQREVYFMGLIDVLTQYDTKKKAAHAAKTVKHGAGAEISTVHPEQYAKRFREFISNIFA</sequence>
<reference key="1">
    <citation type="submission" date="2004-06" db="EMBL/GenBank/DDBJ databases">
        <authorList>
            <consortium name="NIH - Zebrafish Gene Collection (ZGC) project"/>
        </authorList>
    </citation>
    <scope>NUCLEOTIDE SEQUENCE [LARGE SCALE MRNA]</scope>
    <source>
        <strain>AB</strain>
        <tissue>Embryo</tissue>
    </source>
</reference>
<keyword id="KW-0067">ATP-binding</keyword>
<keyword id="KW-0963">Cytoplasm</keyword>
<keyword id="KW-0256">Endoplasmic reticulum</keyword>
<keyword id="KW-0418">Kinase</keyword>
<keyword id="KW-0443">Lipid metabolism</keyword>
<keyword id="KW-0547">Nucleotide-binding</keyword>
<keyword id="KW-1185">Reference proteome</keyword>
<keyword id="KW-0808">Transferase</keyword>